<organism>
    <name type="scientific">Xylella fastidiosa (strain M12)</name>
    <dbReference type="NCBI Taxonomy" id="405440"/>
    <lineage>
        <taxon>Bacteria</taxon>
        <taxon>Pseudomonadati</taxon>
        <taxon>Pseudomonadota</taxon>
        <taxon>Gammaproteobacteria</taxon>
        <taxon>Lysobacterales</taxon>
        <taxon>Lysobacteraceae</taxon>
        <taxon>Xylella</taxon>
    </lineage>
</organism>
<sequence>MKALFRACRIGKVMLRYRLDTLLDGTAAERWLRLAKPFVPRISAEIVEQSRGRRLRLALQELGPIFVKFGQILSTRRDLVPQDIGDELVMLQDRVEPFEGQTARIIIETALGKSVESAFAHFDTVPLASASISQVHAATLHDRREVVVKVLRPDIEHQISDDIALLKSLATLVEHTHPNADKIRPREIVAEIETTLAAELDLQREGANASVLRRFWEASDDIYVPEVIWSHTAERVLTLERMYGIPSDDIALLDASGIDRKALSSKGIRVFYTQVFRDNFFHADAHSGNIWVDSDPARKSNPRFIALDFGIMGQLSQKDQYYLAENFMAIFHKDYRRIAELHVEAGWIPQHVRIEELEAAARSVCEPYFTRPLSQISLAEVLMKLFHVARRYQLTLQPQLILLQKTLLNIEGVGRQLDPELDIWVVARPVLERILRARYSPRHALKELNKRLPEIMTHAPDTPRLIHTWLVQQVESRKQNDVYLQQIRALAMTLQGLQRRVVNAIVGSGLLVAAAVLYGLHPDGLYLGTIPVWSLISGCVGALALFSAWWRS</sequence>
<gene>
    <name evidence="1" type="primary">ubiB</name>
    <name type="ordered locus">Xfasm12_1190</name>
</gene>
<dbReference type="EC" id="2.7.-.-" evidence="1"/>
<dbReference type="EMBL" id="CP000941">
    <property type="protein sequence ID" value="ACA12141.1"/>
    <property type="molecule type" value="Genomic_DNA"/>
</dbReference>
<dbReference type="RefSeq" id="WP_004084864.1">
    <property type="nucleotide sequence ID" value="NC_010513.1"/>
</dbReference>
<dbReference type="SMR" id="B0U2R2"/>
<dbReference type="KEGG" id="xfm:Xfasm12_1190"/>
<dbReference type="HOGENOM" id="CLU_006533_0_0_6"/>
<dbReference type="UniPathway" id="UPA00232"/>
<dbReference type="GO" id="GO:0005886">
    <property type="term" value="C:plasma membrane"/>
    <property type="evidence" value="ECO:0007669"/>
    <property type="project" value="UniProtKB-SubCell"/>
</dbReference>
<dbReference type="GO" id="GO:0005524">
    <property type="term" value="F:ATP binding"/>
    <property type="evidence" value="ECO:0007669"/>
    <property type="project" value="UniProtKB-KW"/>
</dbReference>
<dbReference type="GO" id="GO:0004672">
    <property type="term" value="F:protein kinase activity"/>
    <property type="evidence" value="ECO:0007669"/>
    <property type="project" value="UniProtKB-UniRule"/>
</dbReference>
<dbReference type="GO" id="GO:0010795">
    <property type="term" value="P:regulation of ubiquinone biosynthetic process"/>
    <property type="evidence" value="ECO:0007669"/>
    <property type="project" value="UniProtKB-UniRule"/>
</dbReference>
<dbReference type="GO" id="GO:0006744">
    <property type="term" value="P:ubiquinone biosynthetic process"/>
    <property type="evidence" value="ECO:0007669"/>
    <property type="project" value="UniProtKB-UniPathway"/>
</dbReference>
<dbReference type="CDD" id="cd13972">
    <property type="entry name" value="UbiB"/>
    <property type="match status" value="1"/>
</dbReference>
<dbReference type="HAMAP" id="MF_00414">
    <property type="entry name" value="UbiB"/>
    <property type="match status" value="1"/>
</dbReference>
<dbReference type="InterPro" id="IPR004147">
    <property type="entry name" value="ABC1_dom"/>
</dbReference>
<dbReference type="InterPro" id="IPR011009">
    <property type="entry name" value="Kinase-like_dom_sf"/>
</dbReference>
<dbReference type="InterPro" id="IPR010232">
    <property type="entry name" value="UbiB"/>
</dbReference>
<dbReference type="InterPro" id="IPR045308">
    <property type="entry name" value="UbiB_bact"/>
</dbReference>
<dbReference type="InterPro" id="IPR050154">
    <property type="entry name" value="UbiB_kinase"/>
</dbReference>
<dbReference type="NCBIfam" id="NF003404">
    <property type="entry name" value="PRK04750.1"/>
    <property type="match status" value="1"/>
</dbReference>
<dbReference type="NCBIfam" id="TIGR01982">
    <property type="entry name" value="UbiB"/>
    <property type="match status" value="1"/>
</dbReference>
<dbReference type="PANTHER" id="PTHR10566">
    <property type="entry name" value="CHAPERONE-ACTIVITY OF BC1 COMPLEX CABC1 -RELATED"/>
    <property type="match status" value="1"/>
</dbReference>
<dbReference type="PANTHER" id="PTHR10566:SF113">
    <property type="entry name" value="PROTEIN ACTIVITY OF BC1 COMPLEX KINASE 7, CHLOROPLASTIC"/>
    <property type="match status" value="1"/>
</dbReference>
<dbReference type="Pfam" id="PF03109">
    <property type="entry name" value="ABC1"/>
    <property type="match status" value="1"/>
</dbReference>
<dbReference type="SUPFAM" id="SSF56112">
    <property type="entry name" value="Protein kinase-like (PK-like)"/>
    <property type="match status" value="1"/>
</dbReference>
<name>UBIB_XYLFM</name>
<keyword id="KW-0067">ATP-binding</keyword>
<keyword id="KW-0997">Cell inner membrane</keyword>
<keyword id="KW-1003">Cell membrane</keyword>
<keyword id="KW-0418">Kinase</keyword>
<keyword id="KW-0472">Membrane</keyword>
<keyword id="KW-0547">Nucleotide-binding</keyword>
<keyword id="KW-0808">Transferase</keyword>
<keyword id="KW-0812">Transmembrane</keyword>
<keyword id="KW-1133">Transmembrane helix</keyword>
<keyword id="KW-0831">Ubiquinone biosynthesis</keyword>
<comment type="function">
    <text evidence="1">Is probably a protein kinase regulator of UbiI activity which is involved in aerobic coenzyme Q (ubiquinone) biosynthesis.</text>
</comment>
<comment type="pathway">
    <text>Cofactor biosynthesis; ubiquinone biosynthesis [regulation].</text>
</comment>
<comment type="subcellular location">
    <subcellularLocation>
        <location evidence="1">Cell inner membrane</location>
        <topology evidence="1">Multi-pass membrane protein</topology>
    </subcellularLocation>
</comment>
<comment type="similarity">
    <text evidence="1">Belongs to the ABC1 family. UbiB subfamily.</text>
</comment>
<feature type="chain" id="PRO_1000123934" description="Probable protein kinase UbiB">
    <location>
        <begin position="1"/>
        <end position="552"/>
    </location>
</feature>
<feature type="transmembrane region" description="Helical" evidence="1">
    <location>
        <begin position="501"/>
        <end position="521"/>
    </location>
</feature>
<feature type="transmembrane region" description="Helical" evidence="1">
    <location>
        <begin position="530"/>
        <end position="550"/>
    </location>
</feature>
<feature type="domain" description="Protein kinase" evidence="1">
    <location>
        <begin position="121"/>
        <end position="504"/>
    </location>
</feature>
<feature type="active site" description="Proton acceptor" evidence="1">
    <location>
        <position position="284"/>
    </location>
</feature>
<feature type="binding site" evidence="1">
    <location>
        <begin position="127"/>
        <end position="135"/>
    </location>
    <ligand>
        <name>ATP</name>
        <dbReference type="ChEBI" id="CHEBI:30616"/>
    </ligand>
</feature>
<feature type="binding site" evidence="1">
    <location>
        <position position="149"/>
    </location>
    <ligand>
        <name>ATP</name>
        <dbReference type="ChEBI" id="CHEBI:30616"/>
    </ligand>
</feature>
<reference key="1">
    <citation type="journal article" date="2010" name="J. Bacteriol.">
        <title>Whole genome sequences of two Xylella fastidiosa strains (M12 and M23) causing almond leaf scorch disease in California.</title>
        <authorList>
            <person name="Chen J."/>
            <person name="Xie G."/>
            <person name="Han S."/>
            <person name="Chertkov O."/>
            <person name="Sims D."/>
            <person name="Civerolo E.L."/>
        </authorList>
    </citation>
    <scope>NUCLEOTIDE SEQUENCE [LARGE SCALE GENOMIC DNA]</scope>
    <source>
        <strain>M12</strain>
    </source>
</reference>
<evidence type="ECO:0000255" key="1">
    <source>
        <dbReference type="HAMAP-Rule" id="MF_00414"/>
    </source>
</evidence>
<proteinExistence type="inferred from homology"/>
<accession>B0U2R2</accession>
<protein>
    <recommendedName>
        <fullName evidence="1">Probable protein kinase UbiB</fullName>
        <ecNumber evidence="1">2.7.-.-</ecNumber>
    </recommendedName>
    <alternativeName>
        <fullName evidence="1">Ubiquinone biosynthesis protein UbiB</fullName>
    </alternativeName>
</protein>